<dbReference type="EMBL" id="CU458896">
    <property type="protein sequence ID" value="CAM61527.1"/>
    <property type="molecule type" value="Genomic_DNA"/>
</dbReference>
<dbReference type="RefSeq" id="WP_005059822.1">
    <property type="nucleotide sequence ID" value="NZ_MLCG01000002.1"/>
</dbReference>
<dbReference type="SMR" id="B1MLV0"/>
<dbReference type="GeneID" id="93378386"/>
<dbReference type="KEGG" id="mab:MAB_1441"/>
<dbReference type="Proteomes" id="UP000007137">
    <property type="component" value="Chromosome"/>
</dbReference>
<dbReference type="GO" id="GO:1990904">
    <property type="term" value="C:ribonucleoprotein complex"/>
    <property type="evidence" value="ECO:0007669"/>
    <property type="project" value="UniProtKB-KW"/>
</dbReference>
<dbReference type="GO" id="GO:0005840">
    <property type="term" value="C:ribosome"/>
    <property type="evidence" value="ECO:0007669"/>
    <property type="project" value="UniProtKB-KW"/>
</dbReference>
<dbReference type="GO" id="GO:0046872">
    <property type="term" value="F:metal ion binding"/>
    <property type="evidence" value="ECO:0007669"/>
    <property type="project" value="UniProtKB-KW"/>
</dbReference>
<dbReference type="GO" id="GO:0019843">
    <property type="term" value="F:rRNA binding"/>
    <property type="evidence" value="ECO:0007669"/>
    <property type="project" value="UniProtKB-KW"/>
</dbReference>
<dbReference type="GO" id="GO:0003735">
    <property type="term" value="F:structural constituent of ribosome"/>
    <property type="evidence" value="ECO:0007669"/>
    <property type="project" value="InterPro"/>
</dbReference>
<dbReference type="GO" id="GO:0006412">
    <property type="term" value="P:translation"/>
    <property type="evidence" value="ECO:0007669"/>
    <property type="project" value="UniProtKB-UniRule"/>
</dbReference>
<dbReference type="Gene3D" id="4.10.830.30">
    <property type="entry name" value="Ribosomal protein L31"/>
    <property type="match status" value="1"/>
</dbReference>
<dbReference type="HAMAP" id="MF_00501">
    <property type="entry name" value="Ribosomal_bL31_1"/>
    <property type="match status" value="1"/>
</dbReference>
<dbReference type="InterPro" id="IPR034704">
    <property type="entry name" value="Ribosomal_bL28/bL31-like_sf"/>
</dbReference>
<dbReference type="InterPro" id="IPR002150">
    <property type="entry name" value="Ribosomal_bL31"/>
</dbReference>
<dbReference type="InterPro" id="IPR027491">
    <property type="entry name" value="Ribosomal_bL31_A"/>
</dbReference>
<dbReference type="InterPro" id="IPR042105">
    <property type="entry name" value="Ribosomal_bL31_sf"/>
</dbReference>
<dbReference type="NCBIfam" id="TIGR00105">
    <property type="entry name" value="L31"/>
    <property type="match status" value="1"/>
</dbReference>
<dbReference type="NCBIfam" id="NF000612">
    <property type="entry name" value="PRK00019.1"/>
    <property type="match status" value="1"/>
</dbReference>
<dbReference type="NCBIfam" id="NF001809">
    <property type="entry name" value="PRK00528.1"/>
    <property type="match status" value="1"/>
</dbReference>
<dbReference type="PANTHER" id="PTHR33280">
    <property type="entry name" value="50S RIBOSOMAL PROTEIN L31, CHLOROPLASTIC"/>
    <property type="match status" value="1"/>
</dbReference>
<dbReference type="PANTHER" id="PTHR33280:SF1">
    <property type="entry name" value="LARGE RIBOSOMAL SUBUNIT PROTEIN BL31C"/>
    <property type="match status" value="1"/>
</dbReference>
<dbReference type="Pfam" id="PF01197">
    <property type="entry name" value="Ribosomal_L31"/>
    <property type="match status" value="1"/>
</dbReference>
<dbReference type="PRINTS" id="PR01249">
    <property type="entry name" value="RIBOSOMALL31"/>
</dbReference>
<dbReference type="SUPFAM" id="SSF143800">
    <property type="entry name" value="L28p-like"/>
    <property type="match status" value="1"/>
</dbReference>
<dbReference type="PROSITE" id="PS01143">
    <property type="entry name" value="RIBOSOMAL_L31"/>
    <property type="match status" value="1"/>
</dbReference>
<evidence type="ECO:0000255" key="1">
    <source>
        <dbReference type="HAMAP-Rule" id="MF_00501"/>
    </source>
</evidence>
<evidence type="ECO:0000305" key="2"/>
<name>RL31_MYCA9</name>
<proteinExistence type="inferred from homology"/>
<feature type="chain" id="PRO_1000126662" description="Large ribosomal subunit protein bL31">
    <location>
        <begin position="1"/>
        <end position="74"/>
    </location>
</feature>
<feature type="binding site" evidence="1">
    <location>
        <position position="16"/>
    </location>
    <ligand>
        <name>Zn(2+)</name>
        <dbReference type="ChEBI" id="CHEBI:29105"/>
    </ligand>
</feature>
<feature type="binding site" evidence="1">
    <location>
        <position position="18"/>
    </location>
    <ligand>
        <name>Zn(2+)</name>
        <dbReference type="ChEBI" id="CHEBI:29105"/>
    </ligand>
</feature>
<feature type="binding site" evidence="1">
    <location>
        <position position="38"/>
    </location>
    <ligand>
        <name>Zn(2+)</name>
        <dbReference type="ChEBI" id="CHEBI:29105"/>
    </ligand>
</feature>
<feature type="binding site" evidence="1">
    <location>
        <position position="41"/>
    </location>
    <ligand>
        <name>Zn(2+)</name>
        <dbReference type="ChEBI" id="CHEBI:29105"/>
    </ligand>
</feature>
<organism>
    <name type="scientific">Mycobacteroides abscessus (strain ATCC 19977 / DSM 44196 / CCUG 20993 / CIP 104536 / JCM 13569 / NCTC 13031 / TMC 1543 / L948)</name>
    <name type="common">Mycobacterium abscessus</name>
    <dbReference type="NCBI Taxonomy" id="561007"/>
    <lineage>
        <taxon>Bacteria</taxon>
        <taxon>Bacillati</taxon>
        <taxon>Actinomycetota</taxon>
        <taxon>Actinomycetes</taxon>
        <taxon>Mycobacteriales</taxon>
        <taxon>Mycobacteriaceae</taxon>
        <taxon>Mycobacteroides</taxon>
        <taxon>Mycobacteroides abscessus</taxon>
    </lineage>
</organism>
<sequence>MKSGIHPNYVETNVVCGCGNTFTTRSTKESGHIVVEVCSQCHPFYTGKQKILDSGGRVARFEARYGKRKAAADK</sequence>
<keyword id="KW-0479">Metal-binding</keyword>
<keyword id="KW-1185">Reference proteome</keyword>
<keyword id="KW-0687">Ribonucleoprotein</keyword>
<keyword id="KW-0689">Ribosomal protein</keyword>
<keyword id="KW-0694">RNA-binding</keyword>
<keyword id="KW-0699">rRNA-binding</keyword>
<keyword id="KW-0862">Zinc</keyword>
<gene>
    <name evidence="1" type="primary">rpmE</name>
    <name type="ordered locus">MAB_1441</name>
</gene>
<comment type="function">
    <text evidence="1">Binds the 23S rRNA.</text>
</comment>
<comment type="cofactor">
    <cofactor evidence="1">
        <name>Zn(2+)</name>
        <dbReference type="ChEBI" id="CHEBI:29105"/>
    </cofactor>
    <text evidence="1">Binds 1 zinc ion per subunit.</text>
</comment>
<comment type="subunit">
    <text evidence="1">Part of the 50S ribosomal subunit.</text>
</comment>
<comment type="similarity">
    <text evidence="1">Belongs to the bacterial ribosomal protein bL31 family. Type A subfamily.</text>
</comment>
<protein>
    <recommendedName>
        <fullName evidence="1">Large ribosomal subunit protein bL31</fullName>
    </recommendedName>
    <alternativeName>
        <fullName evidence="2">50S ribosomal protein L31</fullName>
    </alternativeName>
</protein>
<accession>B1MLV0</accession>
<reference key="1">
    <citation type="journal article" date="2009" name="PLoS ONE">
        <title>Non mycobacterial virulence genes in the genome of the emerging pathogen Mycobacterium abscessus.</title>
        <authorList>
            <person name="Ripoll F."/>
            <person name="Pasek S."/>
            <person name="Schenowitz C."/>
            <person name="Dossat C."/>
            <person name="Barbe V."/>
            <person name="Rottman M."/>
            <person name="Macheras E."/>
            <person name="Heym B."/>
            <person name="Herrmann J.L."/>
            <person name="Daffe M."/>
            <person name="Brosch R."/>
            <person name="Risler J.L."/>
            <person name="Gaillard J.L."/>
        </authorList>
    </citation>
    <scope>NUCLEOTIDE SEQUENCE [LARGE SCALE GENOMIC DNA]</scope>
    <source>
        <strain>ATCC 19977 / DSM 44196 / CCUG 20993 / CIP 104536 / JCM 13569 / NCTC 13031 / TMC 1543 / L948</strain>
    </source>
</reference>